<dbReference type="EC" id="3.2.2.21"/>
<dbReference type="EMBL" id="U76637">
    <property type="protein sequence ID" value="AAC49524.1"/>
    <property type="molecule type" value="mRNA"/>
</dbReference>
<dbReference type="EMBL" id="CU329670">
    <property type="protein sequence ID" value="CAC36900.1"/>
    <property type="molecule type" value="Genomic_DNA"/>
</dbReference>
<dbReference type="PIR" id="JC5177">
    <property type="entry name" value="JC5177"/>
</dbReference>
<dbReference type="RefSeq" id="NP_593991.1">
    <property type="nucleotide sequence ID" value="NM_001019417.2"/>
</dbReference>
<dbReference type="PDB" id="3S6I">
    <property type="method" value="X-ray"/>
    <property type="resolution" value="2.28 A"/>
    <property type="chains" value="A/D=1-228"/>
</dbReference>
<dbReference type="PDBsum" id="3S6I"/>
<dbReference type="SMR" id="Q92383"/>
<dbReference type="BioGRID" id="279981">
    <property type="interactions" value="30"/>
</dbReference>
<dbReference type="FunCoup" id="Q92383">
    <property type="interactions" value="17"/>
</dbReference>
<dbReference type="STRING" id="284812.Q92383"/>
<dbReference type="PaxDb" id="4896-SPAPB24D3.04c.1"/>
<dbReference type="EnsemblFungi" id="SPAPB24D3.04c.1">
    <property type="protein sequence ID" value="SPAPB24D3.04c.1:pep"/>
    <property type="gene ID" value="SPAPB24D3.04c"/>
</dbReference>
<dbReference type="GeneID" id="2543565"/>
<dbReference type="KEGG" id="spo:2543565"/>
<dbReference type="PomBase" id="SPAPB24D3.04c">
    <property type="gene designation" value="mag1"/>
</dbReference>
<dbReference type="VEuPathDB" id="FungiDB:SPAPB24D3.04c"/>
<dbReference type="eggNOG" id="KOG1918">
    <property type="taxonomic scope" value="Eukaryota"/>
</dbReference>
<dbReference type="HOGENOM" id="CLU_000445_72_5_1"/>
<dbReference type="InParanoid" id="Q92383"/>
<dbReference type="OMA" id="IVCGQQL"/>
<dbReference type="PhylomeDB" id="Q92383"/>
<dbReference type="EvolutionaryTrace" id="Q92383"/>
<dbReference type="PRO" id="PR:Q92383"/>
<dbReference type="Proteomes" id="UP000002485">
    <property type="component" value="Chromosome I"/>
</dbReference>
<dbReference type="GO" id="GO:0005634">
    <property type="term" value="C:nucleus"/>
    <property type="evidence" value="ECO:0007005"/>
    <property type="project" value="PomBase"/>
</dbReference>
<dbReference type="GO" id="GO:0032993">
    <property type="term" value="C:protein-DNA complex"/>
    <property type="evidence" value="ECO:0000314"/>
    <property type="project" value="PomBase"/>
</dbReference>
<dbReference type="GO" id="GO:0032131">
    <property type="term" value="F:alkylated DNA binding"/>
    <property type="evidence" value="ECO:0000314"/>
    <property type="project" value="PomBase"/>
</dbReference>
<dbReference type="GO" id="GO:0003905">
    <property type="term" value="F:alkylbase DNA N-glycosylase activity"/>
    <property type="evidence" value="ECO:0000314"/>
    <property type="project" value="PomBase"/>
</dbReference>
<dbReference type="GO" id="GO:0003684">
    <property type="term" value="F:damaged DNA binding"/>
    <property type="evidence" value="ECO:0000314"/>
    <property type="project" value="PomBase"/>
</dbReference>
<dbReference type="GO" id="GO:0052820">
    <property type="term" value="F:DNA-1,N6-ethenoadenine N-glycosylase activity"/>
    <property type="evidence" value="ECO:0000314"/>
    <property type="project" value="PomBase"/>
</dbReference>
<dbReference type="GO" id="GO:0008725">
    <property type="term" value="F:DNA-3-methyladenine glycosylase activity"/>
    <property type="evidence" value="ECO:0000316"/>
    <property type="project" value="PomBase"/>
</dbReference>
<dbReference type="GO" id="GO:0043916">
    <property type="term" value="F:DNA-7-methylguanine glycosylase activity"/>
    <property type="evidence" value="ECO:0000314"/>
    <property type="project" value="PomBase"/>
</dbReference>
<dbReference type="GO" id="GO:0006285">
    <property type="term" value="P:base-excision repair, AP site formation"/>
    <property type="evidence" value="ECO:0000316"/>
    <property type="project" value="PomBase"/>
</dbReference>
<dbReference type="GO" id="GO:0006307">
    <property type="term" value="P:DNA alkylation repair"/>
    <property type="evidence" value="ECO:0000314"/>
    <property type="project" value="PomBase"/>
</dbReference>
<dbReference type="CDD" id="cd00056">
    <property type="entry name" value="ENDO3c"/>
    <property type="match status" value="1"/>
</dbReference>
<dbReference type="FunFam" id="1.10.340.30:FF:000004">
    <property type="entry name" value="DNA-3-methyladenine glycosylase II"/>
    <property type="match status" value="1"/>
</dbReference>
<dbReference type="Gene3D" id="1.10.1670.40">
    <property type="match status" value="1"/>
</dbReference>
<dbReference type="Gene3D" id="1.10.340.30">
    <property type="entry name" value="Hypothetical protein, domain 2"/>
    <property type="match status" value="1"/>
</dbReference>
<dbReference type="InterPro" id="IPR051912">
    <property type="entry name" value="Alkylbase_DNA_Glycosylase/TA"/>
</dbReference>
<dbReference type="InterPro" id="IPR000035">
    <property type="entry name" value="Alkylbase_DNA_glycsylse_CS"/>
</dbReference>
<dbReference type="InterPro" id="IPR011257">
    <property type="entry name" value="DNA_glycosylase"/>
</dbReference>
<dbReference type="InterPro" id="IPR003265">
    <property type="entry name" value="HhH-GPD_domain"/>
</dbReference>
<dbReference type="PANTHER" id="PTHR43003">
    <property type="entry name" value="DNA-3-METHYLADENINE GLYCOSYLASE"/>
    <property type="match status" value="1"/>
</dbReference>
<dbReference type="PANTHER" id="PTHR43003:SF5">
    <property type="entry name" value="DNA-3-METHYLADENINE GLYCOSYLASE"/>
    <property type="match status" value="1"/>
</dbReference>
<dbReference type="Pfam" id="PF00730">
    <property type="entry name" value="HhH-GPD"/>
    <property type="match status" value="1"/>
</dbReference>
<dbReference type="SMART" id="SM00478">
    <property type="entry name" value="ENDO3c"/>
    <property type="match status" value="1"/>
</dbReference>
<dbReference type="SUPFAM" id="SSF48150">
    <property type="entry name" value="DNA-glycosylase"/>
    <property type="match status" value="1"/>
</dbReference>
<dbReference type="PROSITE" id="PS00516">
    <property type="entry name" value="ALKYLBASE_DNA_GLYCOS"/>
    <property type="match status" value="1"/>
</dbReference>
<comment type="function">
    <text>Hydrolysis of the deoxyribose N-glycosidic bond to excise 3-methyladenine or 7-methyladenine from the damaged DNA polymer formed by alkylation lesions. Can release ethylated and propylated bases from DNA in addition to 3-methyladenine.</text>
</comment>
<comment type="catalytic activity">
    <reaction>
        <text>Hydrolysis of alkylated DNA, releasing 3-methyladenine, 3-methylguanine, 7-methylguanine and 7-methyladenine.</text>
        <dbReference type="EC" id="3.2.2.21"/>
    </reaction>
</comment>
<comment type="similarity">
    <text evidence="2">Belongs to the alkylbase DNA glycosidase AlkA family.</text>
</comment>
<protein>
    <recommendedName>
        <fullName>DNA-3-methyladenine glycosylase 1</fullName>
        <ecNumber>3.2.2.21</ecNumber>
    </recommendedName>
    <alternativeName>
        <fullName>3-methyladenine DNA glycosidase 1</fullName>
    </alternativeName>
    <alternativeName>
        <fullName>3MEA DNA glycosylase 1</fullName>
    </alternativeName>
</protein>
<name>MAG1_SCHPO</name>
<keyword id="KW-0002">3D-structure</keyword>
<keyword id="KW-0227">DNA damage</keyword>
<keyword id="KW-0234">DNA repair</keyword>
<keyword id="KW-0378">Hydrolase</keyword>
<keyword id="KW-1185">Reference proteome</keyword>
<sequence length="228" mass="26381">MTLDIEEKEEIVTSLTKAEIHLSGLDENWKRLVKLVGNYRPNRSMEKKEPYEELIRAVASQQLHSKAANAIFNRFKSISNNGQFPTPEEIRDMDFEIMRACGFSARKIDSLKSIAEATISGLIPTKEEAERLSNEELIERLTQIKGIGRWTVEMLLIFSLNRDDVMPADDLSIRNGYRYLHRLPKIPTKMYVLKHSEICAPFRTAAAWYLWKTSKLADYTKPVRPKKH</sequence>
<organism>
    <name type="scientific">Schizosaccharomyces pombe (strain 972 / ATCC 24843)</name>
    <name type="common">Fission yeast</name>
    <dbReference type="NCBI Taxonomy" id="284812"/>
    <lineage>
        <taxon>Eukaryota</taxon>
        <taxon>Fungi</taxon>
        <taxon>Dikarya</taxon>
        <taxon>Ascomycota</taxon>
        <taxon>Taphrinomycotina</taxon>
        <taxon>Schizosaccharomycetes</taxon>
        <taxon>Schizosaccharomycetales</taxon>
        <taxon>Schizosaccharomycetaceae</taxon>
        <taxon>Schizosaccharomyces</taxon>
    </lineage>
</organism>
<evidence type="ECO:0000250" key="1"/>
<evidence type="ECO:0000305" key="2"/>
<evidence type="ECO:0007829" key="3">
    <source>
        <dbReference type="PDB" id="3S6I"/>
    </source>
</evidence>
<reference key="1">
    <citation type="journal article" date="1996" name="Gene">
        <title>Cloning and characterization of a cDNA encoding a 3-methyladenine DNA glycosylase from the fission yeast Schizosaccharomyces pombe.</title>
        <authorList>
            <person name="Memisoglu A."/>
            <person name="Samson L."/>
        </authorList>
    </citation>
    <scope>NUCLEOTIDE SEQUENCE [MRNA]</scope>
</reference>
<reference key="2">
    <citation type="journal article" date="2002" name="Nature">
        <title>The genome sequence of Schizosaccharomyces pombe.</title>
        <authorList>
            <person name="Wood V."/>
            <person name="Gwilliam R."/>
            <person name="Rajandream M.A."/>
            <person name="Lyne M.H."/>
            <person name="Lyne R."/>
            <person name="Stewart A."/>
            <person name="Sgouros J.G."/>
            <person name="Peat N."/>
            <person name="Hayles J."/>
            <person name="Baker S.G."/>
            <person name="Basham D."/>
            <person name="Bowman S."/>
            <person name="Brooks K."/>
            <person name="Brown D."/>
            <person name="Brown S."/>
            <person name="Chillingworth T."/>
            <person name="Churcher C.M."/>
            <person name="Collins M."/>
            <person name="Connor R."/>
            <person name="Cronin A."/>
            <person name="Davis P."/>
            <person name="Feltwell T."/>
            <person name="Fraser A."/>
            <person name="Gentles S."/>
            <person name="Goble A."/>
            <person name="Hamlin N."/>
            <person name="Harris D.E."/>
            <person name="Hidalgo J."/>
            <person name="Hodgson G."/>
            <person name="Holroyd S."/>
            <person name="Hornsby T."/>
            <person name="Howarth S."/>
            <person name="Huckle E.J."/>
            <person name="Hunt S."/>
            <person name="Jagels K."/>
            <person name="James K.D."/>
            <person name="Jones L."/>
            <person name="Jones M."/>
            <person name="Leather S."/>
            <person name="McDonald S."/>
            <person name="McLean J."/>
            <person name="Mooney P."/>
            <person name="Moule S."/>
            <person name="Mungall K.L."/>
            <person name="Murphy L.D."/>
            <person name="Niblett D."/>
            <person name="Odell C."/>
            <person name="Oliver K."/>
            <person name="O'Neil S."/>
            <person name="Pearson D."/>
            <person name="Quail M.A."/>
            <person name="Rabbinowitsch E."/>
            <person name="Rutherford K.M."/>
            <person name="Rutter S."/>
            <person name="Saunders D."/>
            <person name="Seeger K."/>
            <person name="Sharp S."/>
            <person name="Skelton J."/>
            <person name="Simmonds M.N."/>
            <person name="Squares R."/>
            <person name="Squares S."/>
            <person name="Stevens K."/>
            <person name="Taylor K."/>
            <person name="Taylor R.G."/>
            <person name="Tivey A."/>
            <person name="Walsh S.V."/>
            <person name="Warren T."/>
            <person name="Whitehead S."/>
            <person name="Woodward J.R."/>
            <person name="Volckaert G."/>
            <person name="Aert R."/>
            <person name="Robben J."/>
            <person name="Grymonprez B."/>
            <person name="Weltjens I."/>
            <person name="Vanstreels E."/>
            <person name="Rieger M."/>
            <person name="Schaefer M."/>
            <person name="Mueller-Auer S."/>
            <person name="Gabel C."/>
            <person name="Fuchs M."/>
            <person name="Duesterhoeft A."/>
            <person name="Fritzc C."/>
            <person name="Holzer E."/>
            <person name="Moestl D."/>
            <person name="Hilbert H."/>
            <person name="Borzym K."/>
            <person name="Langer I."/>
            <person name="Beck A."/>
            <person name="Lehrach H."/>
            <person name="Reinhardt R."/>
            <person name="Pohl T.M."/>
            <person name="Eger P."/>
            <person name="Zimmermann W."/>
            <person name="Wedler H."/>
            <person name="Wambutt R."/>
            <person name="Purnelle B."/>
            <person name="Goffeau A."/>
            <person name="Cadieu E."/>
            <person name="Dreano S."/>
            <person name="Gloux S."/>
            <person name="Lelaure V."/>
            <person name="Mottier S."/>
            <person name="Galibert F."/>
            <person name="Aves S.J."/>
            <person name="Xiang Z."/>
            <person name="Hunt C."/>
            <person name="Moore K."/>
            <person name="Hurst S.M."/>
            <person name="Lucas M."/>
            <person name="Rochet M."/>
            <person name="Gaillardin C."/>
            <person name="Tallada V.A."/>
            <person name="Garzon A."/>
            <person name="Thode G."/>
            <person name="Daga R.R."/>
            <person name="Cruzado L."/>
            <person name="Jimenez J."/>
            <person name="Sanchez M."/>
            <person name="del Rey F."/>
            <person name="Benito J."/>
            <person name="Dominguez A."/>
            <person name="Revuelta J.L."/>
            <person name="Moreno S."/>
            <person name="Armstrong J."/>
            <person name="Forsburg S.L."/>
            <person name="Cerutti L."/>
            <person name="Lowe T."/>
            <person name="McCombie W.R."/>
            <person name="Paulsen I."/>
            <person name="Potashkin J."/>
            <person name="Shpakovski G.V."/>
            <person name="Ussery D."/>
            <person name="Barrell B.G."/>
            <person name="Nurse P."/>
        </authorList>
    </citation>
    <scope>NUCLEOTIDE SEQUENCE [LARGE SCALE GENOMIC DNA]</scope>
    <source>
        <strain>972 / ATCC 24843</strain>
    </source>
</reference>
<gene>
    <name type="primary">mag1</name>
    <name type="ORF">SPAPB24D3.04c</name>
</gene>
<proteinExistence type="evidence at protein level"/>
<feature type="chain" id="PRO_0000194881" description="DNA-3-methyladenine glycosylase 1">
    <location>
        <begin position="1"/>
        <end position="228"/>
    </location>
</feature>
<feature type="active site" description="Proton acceptor" evidence="1">
    <location>
        <position position="170"/>
    </location>
</feature>
<feature type="site" description="Determinant for substrate specificity and/or activity" evidence="1">
    <location>
        <position position="150"/>
    </location>
</feature>
<feature type="helix" evidence="3">
    <location>
        <begin position="17"/>
        <end position="23"/>
    </location>
</feature>
<feature type="helix" evidence="3">
    <location>
        <begin position="27"/>
        <end position="36"/>
    </location>
</feature>
<feature type="turn" evidence="3">
    <location>
        <begin position="44"/>
        <end position="47"/>
    </location>
</feature>
<feature type="helix" evidence="3">
    <location>
        <begin position="50"/>
        <end position="60"/>
    </location>
</feature>
<feature type="strand" evidence="3">
    <location>
        <begin position="61"/>
        <end position="63"/>
    </location>
</feature>
<feature type="helix" evidence="3">
    <location>
        <begin position="65"/>
        <end position="76"/>
    </location>
</feature>
<feature type="helix" evidence="3">
    <location>
        <begin position="80"/>
        <end position="82"/>
    </location>
</feature>
<feature type="helix" evidence="3">
    <location>
        <begin position="87"/>
        <end position="92"/>
    </location>
</feature>
<feature type="helix" evidence="3">
    <location>
        <begin position="95"/>
        <end position="101"/>
    </location>
</feature>
<feature type="helix" evidence="3">
    <location>
        <begin position="105"/>
        <end position="120"/>
    </location>
</feature>
<feature type="strand" evidence="3">
    <location>
        <begin position="121"/>
        <end position="123"/>
    </location>
</feature>
<feature type="helix" evidence="3">
    <location>
        <begin position="126"/>
        <end position="129"/>
    </location>
</feature>
<feature type="helix" evidence="3">
    <location>
        <begin position="134"/>
        <end position="141"/>
    </location>
</feature>
<feature type="helix" evidence="3">
    <location>
        <begin position="149"/>
        <end position="158"/>
    </location>
</feature>
<feature type="helix" evidence="3">
    <location>
        <begin position="171"/>
        <end position="180"/>
    </location>
</feature>
<feature type="helix" evidence="3">
    <location>
        <begin position="189"/>
        <end position="196"/>
    </location>
</feature>
<feature type="helix" evidence="3">
    <location>
        <begin position="197"/>
        <end position="199"/>
    </location>
</feature>
<feature type="helix" evidence="3">
    <location>
        <begin position="203"/>
        <end position="212"/>
    </location>
</feature>
<feature type="helix" evidence="3">
    <location>
        <begin position="213"/>
        <end position="215"/>
    </location>
</feature>
<accession>Q92383</accession>